<protein>
    <recommendedName>
        <fullName>V-type proton ATPase subunit H</fullName>
        <shortName>V-ATPase subunit H</shortName>
    </recommendedName>
    <alternativeName>
        <fullName>V-ATPase 50/57 kDa subunits</fullName>
    </alternativeName>
    <alternativeName>
        <fullName>Vacuolar proton pump subunit H</fullName>
    </alternativeName>
    <alternativeName>
        <fullName>Vacuolar proton pump subunit SFD</fullName>
    </alternativeName>
</protein>
<comment type="function">
    <text evidence="1 2 3">Subunit of the V1 complex of vacuolar(H+)-ATPase (V-ATPase), a multisubunit enzyme composed of a peripheral complex (V1) that hydrolyzes ATP and a membrane integral complex (V0) that translocates protons (By similarity). V-ATPase is responsible for acidifying and maintaining the pH of intracellular compartments and in some cell types, is targeted to the plasma membrane, where it is responsible for acidifying the extracellular environment (By similarity). Subunit H is essential for V-ATPase activity, but not for the assembly of the complex (By similarity). Involved in the endocytosis mediated by clathrin-coated pits, required for the formation of endosomes (By similarity).</text>
</comment>
<comment type="subunit">
    <text evidence="3">V-ATPase is a heteromultimeric enzyme made up of two complexes: the ATP-hydrolytic V1 complex and the proton translocation V0 complex (By similarity). The V1 complex consists of three catalytic AB heterodimers that form a heterohexamer, three peripheral stalks each consisting of EG heterodimers, one central rotor including subunits D and F, and the regulatory subunits C and H (By similarity). The proton translocation complex V0 consists of the proton transport subunit a, a ring of proteolipid subunits c9c'', rotary subunit d, subunits e and f, and the accessory subunits ATP6AP1/Ac45 and ATP6AP2/PRR (By similarity). Interacts with AP2M1 (By similarity).</text>
</comment>
<comment type="subcellular location">
    <subcellularLocation>
        <location evidence="1">Cytoplasmic vesicle</location>
        <location evidence="1">Clathrin-coated vesicle membrane</location>
        <topology evidence="5">Peripheral membrane protein</topology>
    </subcellularLocation>
</comment>
<comment type="alternative products">
    <event type="alternative splicing"/>
    <isoform>
        <id>Q9TVC1-1</id>
        <name>Alpha</name>
        <name>57 kDa</name>
        <sequence type="displayed"/>
    </isoform>
    <isoform>
        <id>Q9TVC1-2</id>
        <name>Beta</name>
        <name>50 kDa</name>
        <sequence type="described" ref="VSP_000443"/>
    </isoform>
</comment>
<comment type="similarity">
    <text evidence="5">Belongs to the V-ATPase H subunit family.</text>
</comment>
<proteinExistence type="evidence at protein level"/>
<gene>
    <name type="primary">ATP6V1H</name>
</gene>
<reference key="1">
    <citation type="journal article" date="1999" name="Mamm. Genome">
        <title>Molecular cloning and chromosomal assignment of the porcine 54 kDa and 56 kDa vacuolar H(+)-ATPase subunit gene (V-ATPase).</title>
        <authorList>
            <person name="Hui D."/>
            <person name="Deppe A."/>
            <person name="Wen G."/>
            <person name="Leeb T."/>
            <person name="Masabanda J."/>
            <person name="Robic A."/>
            <person name="Baumgartner B.G."/>
            <person name="Fries R."/>
            <person name="Brenig B."/>
        </authorList>
    </citation>
    <scope>NUCLEOTIDE SEQUENCE [GENOMIC DNA / MRNA] (ISOFORMS ALPHA AND BETA)</scope>
    <source>
        <strain>German Landrace</strain>
        <tissue>Liver</tissue>
    </source>
</reference>
<accession>Q9TVC1</accession>
<accession>Q9XSM4</accession>
<accession>Q9XSM5</accession>
<name>VATH_PIG</name>
<organism>
    <name type="scientific">Sus scrofa</name>
    <name type="common">Pig</name>
    <dbReference type="NCBI Taxonomy" id="9823"/>
    <lineage>
        <taxon>Eukaryota</taxon>
        <taxon>Metazoa</taxon>
        <taxon>Chordata</taxon>
        <taxon>Craniata</taxon>
        <taxon>Vertebrata</taxon>
        <taxon>Euteleostomi</taxon>
        <taxon>Mammalia</taxon>
        <taxon>Eutheria</taxon>
        <taxon>Laurasiatheria</taxon>
        <taxon>Artiodactyla</taxon>
        <taxon>Suina</taxon>
        <taxon>Suidae</taxon>
        <taxon>Sus</taxon>
    </lineage>
</organism>
<keyword id="KW-0002">3D-structure</keyword>
<keyword id="KW-0025">Alternative splicing</keyword>
<keyword id="KW-0968">Cytoplasmic vesicle</keyword>
<keyword id="KW-0375">Hydrogen ion transport</keyword>
<keyword id="KW-0406">Ion transport</keyword>
<keyword id="KW-0472">Membrane</keyword>
<keyword id="KW-0597">Phosphoprotein</keyword>
<keyword id="KW-1185">Reference proteome</keyword>
<keyword id="KW-0813">Transport</keyword>
<evidence type="ECO:0000250" key="1">
    <source>
        <dbReference type="UniProtKB" id="O46563"/>
    </source>
</evidence>
<evidence type="ECO:0000250" key="2">
    <source>
        <dbReference type="UniProtKB" id="P41807"/>
    </source>
</evidence>
<evidence type="ECO:0000250" key="3">
    <source>
        <dbReference type="UniProtKB" id="Q9UI12"/>
    </source>
</evidence>
<evidence type="ECO:0000303" key="4">
    <source>
    </source>
</evidence>
<evidence type="ECO:0000305" key="5"/>
<sequence length="483" mass="55850">MTKMDIRGAVDAAVPTNIIAAKAAEVRANKVNWQSYLQGQMISSEDCEFIQRFEMKRSPEEKQEMLQTEGSQCAKTFINLMTHISKEQTVQYILTMVDDTLQENHQRVSIFFDYAKRSKNTAWSYFLPMLNRQDLFTVHMAARIIAKLAAWGKELMEGSDLNYYFNWIKTQLASQKLRGSGVAVETGTVSSSDSSQYVQCVAGCLQLMLRVNEYRFAWVEADGVNCIMGVLSNKCGFQLQYQMIFSIWLLAFSPQMCEHLRRYNIIPVLSDILQESVKEKVTRIILAAFRNFLEKSTERETRQEYALALIQCKVLKQLENLEQQKYDDEDISEDIKFLLEKLGESVQDLSSFDEYSSELKSGRLEWSPVHKSEKFWRENAVRLNEKNYELLKILTKLLEVSDDPQVLAVAAHDVGEYVRHYPRGKRVIEQLGGKQLVMNHMHHEDQQVRYNALLAVQKLMVHNWEYLGKQLQSEQPQTAAARS</sequence>
<feature type="chain" id="PRO_0000124195" description="V-type proton ATPase subunit H">
    <location>
        <begin position="1"/>
        <end position="483"/>
    </location>
</feature>
<feature type="modified residue" description="Phosphoserine" evidence="3">
    <location>
        <position position="483"/>
    </location>
</feature>
<feature type="splice variant" id="VSP_000443" description="In isoform Beta." evidence="4">
    <location>
        <begin position="176"/>
        <end position="193"/>
    </location>
</feature>
<feature type="sequence variant">
    <original>A</original>
    <variation>S</variation>
    <location>
        <position position="173"/>
    </location>
</feature>
<feature type="sequence conflict" description="In Ref. 1; CAB39532." evidence="5" ref="1">
    <original>A</original>
    <variation>R</variation>
    <location>
        <position position="408"/>
    </location>
</feature>
<dbReference type="EMBL" id="AJ223744">
    <property type="protein sequence ID" value="CAB39537.1"/>
    <property type="molecule type" value="Genomic_DNA"/>
</dbReference>
<dbReference type="EMBL" id="AJ223745">
    <property type="protein sequence ID" value="CAB39537.1"/>
    <property type="status" value="JOINED"/>
    <property type="molecule type" value="Genomic_DNA"/>
</dbReference>
<dbReference type="EMBL" id="AJ223746">
    <property type="protein sequence ID" value="CAB39537.1"/>
    <property type="status" value="JOINED"/>
    <property type="molecule type" value="Genomic_DNA"/>
</dbReference>
<dbReference type="EMBL" id="AJ223747">
    <property type="protein sequence ID" value="CAB39537.1"/>
    <property type="status" value="JOINED"/>
    <property type="molecule type" value="Genomic_DNA"/>
</dbReference>
<dbReference type="EMBL" id="AJ223748">
    <property type="protein sequence ID" value="CAB39537.1"/>
    <property type="status" value="JOINED"/>
    <property type="molecule type" value="Genomic_DNA"/>
</dbReference>
<dbReference type="EMBL" id="AJ223749">
    <property type="protein sequence ID" value="CAB39537.1"/>
    <property type="status" value="JOINED"/>
    <property type="molecule type" value="Genomic_DNA"/>
</dbReference>
<dbReference type="EMBL" id="AJ223750">
    <property type="protein sequence ID" value="CAB39537.1"/>
    <property type="status" value="JOINED"/>
    <property type="molecule type" value="Genomic_DNA"/>
</dbReference>
<dbReference type="EMBL" id="AJ223751">
    <property type="protein sequence ID" value="CAB39537.1"/>
    <property type="status" value="JOINED"/>
    <property type="molecule type" value="Genomic_DNA"/>
</dbReference>
<dbReference type="EMBL" id="AJ223752">
    <property type="protein sequence ID" value="CAB39537.1"/>
    <property type="status" value="JOINED"/>
    <property type="molecule type" value="Genomic_DNA"/>
</dbReference>
<dbReference type="EMBL" id="AJ223753">
    <property type="protein sequence ID" value="CAB39537.1"/>
    <property type="status" value="JOINED"/>
    <property type="molecule type" value="Genomic_DNA"/>
</dbReference>
<dbReference type="EMBL" id="AJ223754">
    <property type="protein sequence ID" value="CAB39537.1"/>
    <property type="status" value="JOINED"/>
    <property type="molecule type" value="Genomic_DNA"/>
</dbReference>
<dbReference type="EMBL" id="AJ223755">
    <property type="protein sequence ID" value="CAB39537.1"/>
    <property type="status" value="JOINED"/>
    <property type="molecule type" value="Genomic_DNA"/>
</dbReference>
<dbReference type="EMBL" id="AJ223756">
    <property type="protein sequence ID" value="CAB39537.1"/>
    <property type="status" value="JOINED"/>
    <property type="molecule type" value="Genomic_DNA"/>
</dbReference>
<dbReference type="EMBL" id="AJ223757">
    <property type="protein sequence ID" value="CAB39532.1"/>
    <property type="molecule type" value="mRNA"/>
</dbReference>
<dbReference type="EMBL" id="AJ223758">
    <property type="protein sequence ID" value="CAB39533.1"/>
    <property type="molecule type" value="mRNA"/>
</dbReference>
<dbReference type="RefSeq" id="NP_999405.1">
    <property type="nucleotide sequence ID" value="NM_214240.1"/>
</dbReference>
<dbReference type="RefSeq" id="XP_013848694.1">
    <property type="nucleotide sequence ID" value="XM_013993240.1"/>
</dbReference>
<dbReference type="PDB" id="7U8O">
    <property type="method" value="EM"/>
    <property type="resolution" value="3.50 A"/>
    <property type="chains" value="T=1-483"/>
</dbReference>
<dbReference type="PDB" id="7U8P">
    <property type="method" value="EM"/>
    <property type="resolution" value="3.70 A"/>
    <property type="chains" value="T=1-483"/>
</dbReference>
<dbReference type="PDB" id="7U8Q">
    <property type="method" value="EM"/>
    <property type="resolution" value="4.10 A"/>
    <property type="chains" value="T=1-483"/>
</dbReference>
<dbReference type="PDB" id="7U8R">
    <property type="method" value="EM"/>
    <property type="resolution" value="3.80 A"/>
    <property type="chains" value="T=1-483"/>
</dbReference>
<dbReference type="PDBsum" id="7U8O"/>
<dbReference type="PDBsum" id="7U8P"/>
<dbReference type="PDBsum" id="7U8Q"/>
<dbReference type="PDBsum" id="7U8R"/>
<dbReference type="EMDB" id="EMD-26385"/>
<dbReference type="EMDB" id="EMD-26386"/>
<dbReference type="EMDB" id="EMD-26387"/>
<dbReference type="EMDB" id="EMD-26388"/>
<dbReference type="SMR" id="Q9TVC1"/>
<dbReference type="FunCoup" id="Q9TVC1">
    <property type="interactions" value="3286"/>
</dbReference>
<dbReference type="STRING" id="9823.ENSSSCP00000006676"/>
<dbReference type="PaxDb" id="9823-ENSSSCP00000006676"/>
<dbReference type="PeptideAtlas" id="Q9TVC1"/>
<dbReference type="GeneID" id="397472"/>
<dbReference type="KEGG" id="ssc:397472"/>
<dbReference type="CTD" id="51606"/>
<dbReference type="eggNOG" id="KOG2759">
    <property type="taxonomic scope" value="Eukaryota"/>
</dbReference>
<dbReference type="InParanoid" id="Q9TVC1"/>
<dbReference type="OrthoDB" id="10263554at2759"/>
<dbReference type="Proteomes" id="UP000008227">
    <property type="component" value="Unplaced"/>
</dbReference>
<dbReference type="Proteomes" id="UP000314985">
    <property type="component" value="Unplaced"/>
</dbReference>
<dbReference type="Proteomes" id="UP000694570">
    <property type="component" value="Unplaced"/>
</dbReference>
<dbReference type="Proteomes" id="UP000694571">
    <property type="component" value="Unplaced"/>
</dbReference>
<dbReference type="Proteomes" id="UP000694720">
    <property type="component" value="Unplaced"/>
</dbReference>
<dbReference type="Proteomes" id="UP000694722">
    <property type="component" value="Unplaced"/>
</dbReference>
<dbReference type="Proteomes" id="UP000694723">
    <property type="component" value="Unplaced"/>
</dbReference>
<dbReference type="Proteomes" id="UP000694724">
    <property type="component" value="Unplaced"/>
</dbReference>
<dbReference type="Proteomes" id="UP000694725">
    <property type="component" value="Unplaced"/>
</dbReference>
<dbReference type="Proteomes" id="UP000694726">
    <property type="component" value="Unplaced"/>
</dbReference>
<dbReference type="Proteomes" id="UP000694727">
    <property type="component" value="Unplaced"/>
</dbReference>
<dbReference type="Proteomes" id="UP000694728">
    <property type="component" value="Unplaced"/>
</dbReference>
<dbReference type="GO" id="GO:0030665">
    <property type="term" value="C:clathrin-coated vesicle membrane"/>
    <property type="evidence" value="ECO:0007669"/>
    <property type="project" value="UniProtKB-SubCell"/>
</dbReference>
<dbReference type="GO" id="GO:0000221">
    <property type="term" value="C:vacuolar proton-transporting V-type ATPase, V1 domain"/>
    <property type="evidence" value="ECO:0000250"/>
    <property type="project" value="UniProtKB"/>
</dbReference>
<dbReference type="GO" id="GO:0046961">
    <property type="term" value="F:proton-transporting ATPase activity, rotational mechanism"/>
    <property type="evidence" value="ECO:0007669"/>
    <property type="project" value="InterPro"/>
</dbReference>
<dbReference type="CDD" id="cd00256">
    <property type="entry name" value="VATPase_H"/>
    <property type="match status" value="1"/>
</dbReference>
<dbReference type="FunFam" id="1.25.10.10:FF:000067">
    <property type="entry name" value="V-type proton ATPase subunit H"/>
    <property type="match status" value="1"/>
</dbReference>
<dbReference type="FunFam" id="1.25.40.150:FF:000001">
    <property type="entry name" value="V-type proton ATPase subunit H"/>
    <property type="match status" value="1"/>
</dbReference>
<dbReference type="Gene3D" id="1.25.10.10">
    <property type="entry name" value="Leucine-rich Repeat Variant"/>
    <property type="match status" value="1"/>
</dbReference>
<dbReference type="Gene3D" id="1.25.40.150">
    <property type="entry name" value="V-type ATPase, subunit H, C-terminal domain"/>
    <property type="match status" value="1"/>
</dbReference>
<dbReference type="InterPro" id="IPR011989">
    <property type="entry name" value="ARM-like"/>
</dbReference>
<dbReference type="InterPro" id="IPR016024">
    <property type="entry name" value="ARM-type_fold"/>
</dbReference>
<dbReference type="InterPro" id="IPR004908">
    <property type="entry name" value="ATPase_V1-cplx_hsu"/>
</dbReference>
<dbReference type="InterPro" id="IPR011987">
    <property type="entry name" value="ATPase_V1-cplx_hsu_C"/>
</dbReference>
<dbReference type="InterPro" id="IPR038497">
    <property type="entry name" value="ATPase_V1-cplx_hsu_C_sf"/>
</dbReference>
<dbReference type="PANTHER" id="PTHR10698">
    <property type="entry name" value="V-TYPE PROTON ATPASE SUBUNIT H"/>
    <property type="match status" value="1"/>
</dbReference>
<dbReference type="PANTHER" id="PTHR10698:SF0">
    <property type="entry name" value="V-TYPE PROTON ATPASE SUBUNIT H"/>
    <property type="match status" value="1"/>
</dbReference>
<dbReference type="Pfam" id="PF11698">
    <property type="entry name" value="V-ATPase_H_C"/>
    <property type="match status" value="1"/>
</dbReference>
<dbReference type="Pfam" id="PF03224">
    <property type="entry name" value="V-ATPase_H_N"/>
    <property type="match status" value="1"/>
</dbReference>
<dbReference type="PIRSF" id="PIRSF032184">
    <property type="entry name" value="ATPase_V1_H"/>
    <property type="match status" value="1"/>
</dbReference>
<dbReference type="SUPFAM" id="SSF48371">
    <property type="entry name" value="ARM repeat"/>
    <property type="match status" value="1"/>
</dbReference>